<evidence type="ECO:0000255" key="1">
    <source>
        <dbReference type="HAMAP-Rule" id="MF_01401"/>
    </source>
</evidence>
<organism>
    <name type="scientific">Ectopseudomonas mendocina (strain ymp)</name>
    <name type="common">Pseudomonas mendocina</name>
    <dbReference type="NCBI Taxonomy" id="399739"/>
    <lineage>
        <taxon>Bacteria</taxon>
        <taxon>Pseudomonadati</taxon>
        <taxon>Pseudomonadota</taxon>
        <taxon>Gammaproteobacteria</taxon>
        <taxon>Pseudomonadales</taxon>
        <taxon>Pseudomonadaceae</taxon>
        <taxon>Ectopseudomonas</taxon>
    </lineage>
</organism>
<accession>A4XPS6</accession>
<protein>
    <recommendedName>
        <fullName evidence="1">Peptide methionine sulfoxide reductase MsrA</fullName>
        <shortName evidence="1">Protein-methionine-S-oxide reductase</shortName>
        <ecNumber evidence="1">1.8.4.11</ecNumber>
    </recommendedName>
    <alternativeName>
        <fullName evidence="1">Peptide-methionine (S)-S-oxide reductase</fullName>
        <shortName evidence="1">Peptide Met(O) reductase</shortName>
    </alternativeName>
</protein>
<name>MSRA_ECTM1</name>
<reference key="1">
    <citation type="submission" date="2007-04" db="EMBL/GenBank/DDBJ databases">
        <title>Complete sequence of Pseudomonas mendocina ymp.</title>
        <authorList>
            <consortium name="US DOE Joint Genome Institute"/>
            <person name="Copeland A."/>
            <person name="Lucas S."/>
            <person name="Lapidus A."/>
            <person name="Barry K."/>
            <person name="Glavina del Rio T."/>
            <person name="Dalin E."/>
            <person name="Tice H."/>
            <person name="Pitluck S."/>
            <person name="Kiss H."/>
            <person name="Brettin T."/>
            <person name="Detter J.C."/>
            <person name="Bruce D."/>
            <person name="Han C."/>
            <person name="Schmutz J."/>
            <person name="Larimer F."/>
            <person name="Land M."/>
            <person name="Hauser L."/>
            <person name="Kyrpides N."/>
            <person name="Mikhailova N."/>
            <person name="Hersman L."/>
            <person name="Dubois J."/>
            <person name="Maurice P."/>
            <person name="Richardson P."/>
        </authorList>
    </citation>
    <scope>NUCLEOTIDE SEQUENCE [LARGE SCALE GENOMIC DNA]</scope>
    <source>
        <strain>ymp</strain>
    </source>
</reference>
<feature type="chain" id="PRO_1000068352" description="Peptide methionine sulfoxide reductase MsrA">
    <location>
        <begin position="1"/>
        <end position="219"/>
    </location>
</feature>
<feature type="active site" evidence="1">
    <location>
        <position position="58"/>
    </location>
</feature>
<sequence>MVLRSQILAHKLALPTAEQALPGRAEPLPVAQQHHVNGNPIKPPFPAPMQQAVFGLGCFWGAERRFWQQPGVFSTAVGYAGGFTPNPTYEEVCSGLTGHTEVVLVVFDPQQTSFDALLKVFWEAHNPTQGMRQGNDQGTQYRSAIYCQDHAQLEAALASQARFQAELDKAGLGSITTEICEAPIFYYAETYHQQYLAKNPGGYCGLGGTGVCLPPEPAA</sequence>
<gene>
    <name evidence="1" type="primary">msrA</name>
    <name type="ordered locus">Pmen_0572</name>
</gene>
<keyword id="KW-0560">Oxidoreductase</keyword>
<dbReference type="EC" id="1.8.4.11" evidence="1"/>
<dbReference type="EMBL" id="CP000680">
    <property type="protein sequence ID" value="ABP83342.1"/>
    <property type="molecule type" value="Genomic_DNA"/>
</dbReference>
<dbReference type="SMR" id="A4XPS6"/>
<dbReference type="STRING" id="399739.Pmen_0572"/>
<dbReference type="KEGG" id="pmy:Pmen_0572"/>
<dbReference type="PATRIC" id="fig|399739.8.peg.580"/>
<dbReference type="eggNOG" id="COG0225">
    <property type="taxonomic scope" value="Bacteria"/>
</dbReference>
<dbReference type="HOGENOM" id="CLU_031040_10_3_6"/>
<dbReference type="OrthoDB" id="4174719at2"/>
<dbReference type="GO" id="GO:0005737">
    <property type="term" value="C:cytoplasm"/>
    <property type="evidence" value="ECO:0007669"/>
    <property type="project" value="TreeGrafter"/>
</dbReference>
<dbReference type="GO" id="GO:0036456">
    <property type="term" value="F:L-methionine-(S)-S-oxide reductase activity"/>
    <property type="evidence" value="ECO:0007669"/>
    <property type="project" value="TreeGrafter"/>
</dbReference>
<dbReference type="GO" id="GO:0008113">
    <property type="term" value="F:peptide-methionine (S)-S-oxide reductase activity"/>
    <property type="evidence" value="ECO:0007669"/>
    <property type="project" value="UniProtKB-UniRule"/>
</dbReference>
<dbReference type="GO" id="GO:0034599">
    <property type="term" value="P:cellular response to oxidative stress"/>
    <property type="evidence" value="ECO:0007669"/>
    <property type="project" value="TreeGrafter"/>
</dbReference>
<dbReference type="GO" id="GO:0036211">
    <property type="term" value="P:protein modification process"/>
    <property type="evidence" value="ECO:0007669"/>
    <property type="project" value="UniProtKB-UniRule"/>
</dbReference>
<dbReference type="FunFam" id="3.30.1060.10:FF:000001">
    <property type="entry name" value="Peptide methionine sulfoxide reductase MsrA"/>
    <property type="match status" value="1"/>
</dbReference>
<dbReference type="Gene3D" id="3.30.1060.10">
    <property type="entry name" value="Peptide methionine sulphoxide reductase MsrA"/>
    <property type="match status" value="1"/>
</dbReference>
<dbReference type="HAMAP" id="MF_01401">
    <property type="entry name" value="MsrA"/>
    <property type="match status" value="1"/>
</dbReference>
<dbReference type="InterPro" id="IPR002569">
    <property type="entry name" value="Met_Sox_Rdtase_MsrA_dom"/>
</dbReference>
<dbReference type="InterPro" id="IPR036509">
    <property type="entry name" value="Met_Sox_Rdtase_MsrA_sf"/>
</dbReference>
<dbReference type="InterPro" id="IPR050162">
    <property type="entry name" value="MsrA_MetSO_reductase"/>
</dbReference>
<dbReference type="NCBIfam" id="TIGR00401">
    <property type="entry name" value="msrA"/>
    <property type="match status" value="1"/>
</dbReference>
<dbReference type="PANTHER" id="PTHR42799">
    <property type="entry name" value="MITOCHONDRIAL PEPTIDE METHIONINE SULFOXIDE REDUCTASE"/>
    <property type="match status" value="1"/>
</dbReference>
<dbReference type="PANTHER" id="PTHR42799:SF2">
    <property type="entry name" value="MITOCHONDRIAL PEPTIDE METHIONINE SULFOXIDE REDUCTASE"/>
    <property type="match status" value="1"/>
</dbReference>
<dbReference type="Pfam" id="PF01625">
    <property type="entry name" value="PMSR"/>
    <property type="match status" value="1"/>
</dbReference>
<dbReference type="SUPFAM" id="SSF55068">
    <property type="entry name" value="Peptide methionine sulfoxide reductase"/>
    <property type="match status" value="1"/>
</dbReference>
<proteinExistence type="inferred from homology"/>
<comment type="function">
    <text evidence="1">Has an important function as a repair enzyme for proteins that have been inactivated by oxidation. Catalyzes the reversible oxidation-reduction of methionine sulfoxide in proteins to methionine.</text>
</comment>
<comment type="catalytic activity">
    <reaction evidence="1">
        <text>L-methionyl-[protein] + [thioredoxin]-disulfide + H2O = L-methionyl-(S)-S-oxide-[protein] + [thioredoxin]-dithiol</text>
        <dbReference type="Rhea" id="RHEA:14217"/>
        <dbReference type="Rhea" id="RHEA-COMP:10698"/>
        <dbReference type="Rhea" id="RHEA-COMP:10700"/>
        <dbReference type="Rhea" id="RHEA-COMP:12313"/>
        <dbReference type="Rhea" id="RHEA-COMP:12315"/>
        <dbReference type="ChEBI" id="CHEBI:15377"/>
        <dbReference type="ChEBI" id="CHEBI:16044"/>
        <dbReference type="ChEBI" id="CHEBI:29950"/>
        <dbReference type="ChEBI" id="CHEBI:44120"/>
        <dbReference type="ChEBI" id="CHEBI:50058"/>
        <dbReference type="EC" id="1.8.4.11"/>
    </reaction>
</comment>
<comment type="catalytic activity">
    <reaction evidence="1">
        <text>[thioredoxin]-disulfide + L-methionine + H2O = L-methionine (S)-S-oxide + [thioredoxin]-dithiol</text>
        <dbReference type="Rhea" id="RHEA:19993"/>
        <dbReference type="Rhea" id="RHEA-COMP:10698"/>
        <dbReference type="Rhea" id="RHEA-COMP:10700"/>
        <dbReference type="ChEBI" id="CHEBI:15377"/>
        <dbReference type="ChEBI" id="CHEBI:29950"/>
        <dbReference type="ChEBI" id="CHEBI:50058"/>
        <dbReference type="ChEBI" id="CHEBI:57844"/>
        <dbReference type="ChEBI" id="CHEBI:58772"/>
        <dbReference type="EC" id="1.8.4.11"/>
    </reaction>
</comment>
<comment type="similarity">
    <text evidence="1">Belongs to the MsrA Met sulfoxide reductase family.</text>
</comment>